<reference key="1">
    <citation type="journal article" date="2000" name="Proc. Natl. Acad. Sci. U.S.A.">
        <title>Archaeal adaptation to higher temperatures revealed by genomic sequence of Thermoplasma volcanium.</title>
        <authorList>
            <person name="Kawashima T."/>
            <person name="Amano N."/>
            <person name="Koike H."/>
            <person name="Makino S."/>
            <person name="Higuchi S."/>
            <person name="Kawashima-Ohya Y."/>
            <person name="Watanabe K."/>
            <person name="Yamazaki M."/>
            <person name="Kanehori K."/>
            <person name="Kawamoto T."/>
            <person name="Nunoshiba T."/>
            <person name="Yamamoto Y."/>
            <person name="Aramaki H."/>
            <person name="Makino K."/>
            <person name="Suzuki M."/>
        </authorList>
    </citation>
    <scope>NUCLEOTIDE SEQUENCE [LARGE SCALE GENOMIC DNA]</scope>
    <source>
        <strain>ATCC 51530 / DSM 4299 / JCM 9571 / NBRC 15438 / GSS1</strain>
    </source>
</reference>
<proteinExistence type="inferred from homology"/>
<gene>
    <name evidence="1" type="primary">mptA</name>
    <name type="ordered locus">TV1238</name>
    <name type="ORF">TVG1279013</name>
</gene>
<feature type="chain" id="PRO_0000147754" description="GTP cyclohydrolase MptA">
    <location>
        <begin position="1"/>
        <end position="284"/>
    </location>
</feature>
<feature type="site" description="May be catalytically important" evidence="1">
    <location>
        <position position="142"/>
    </location>
</feature>
<name>MPTA_THEVO</name>
<sequence length="284" mass="31808">MIDFLDVQASTPDIRISVDKVGIRRMKFPIKIGDEVAILSADLYIDIPQTRKGADMSRAVESIQSVLSRPSINLESLGIEICKEALGRFNYASRVEVKINGEYYKKSNGGYDEISLYIRTKCGIDGNIENLTGLSYEAITACPCAMETTRALISKDIPDSENVLYYIPTVTHNQRNRTKLIVSNNAGKISFWDIYKVLESVQGKPLESLLKRIDEGKLVYEAHKKPKFVEDVVREVAFAAVTLLPLSDDDMVIVSSDSEESIHPHNAYASMKKRALDLKKELNL</sequence>
<accession>Q979C3</accession>
<comment type="function">
    <text evidence="1">Converts GTP to 7,8-dihydro-D-neopterin 2',3'-cyclic phosphate, the first intermediate in the biosynthesis of coenzyme methanopterin.</text>
</comment>
<comment type="catalytic activity">
    <reaction evidence="1">
        <text>GTP + H2O = 7,8-dihydroneopterin 2',3'-cyclic phosphate + formate + diphosphate + H(+)</text>
        <dbReference type="Rhea" id="RHEA:25860"/>
        <dbReference type="ChEBI" id="CHEBI:15377"/>
        <dbReference type="ChEBI" id="CHEBI:15378"/>
        <dbReference type="ChEBI" id="CHEBI:15740"/>
        <dbReference type="ChEBI" id="CHEBI:33019"/>
        <dbReference type="ChEBI" id="CHEBI:37565"/>
        <dbReference type="ChEBI" id="CHEBI:58854"/>
        <dbReference type="EC" id="3.5.4.39"/>
    </reaction>
</comment>
<comment type="cofactor">
    <cofactor evidence="1">
        <name>Fe(2+)</name>
        <dbReference type="ChEBI" id="CHEBI:29033"/>
    </cofactor>
    <text evidence="1">Binds 1 Fe(2+) ion per subunit.</text>
</comment>
<comment type="pathway">
    <text evidence="1">Cofactor biosynthesis; 5,6,7,8-tetrahydromethanopterin biosynthesis.</text>
</comment>
<comment type="subunit">
    <text evidence="1">Homodimer.</text>
</comment>
<comment type="similarity">
    <text evidence="1">Belongs to the GTP cyclohydrolase IV family.</text>
</comment>
<organism>
    <name type="scientific">Thermoplasma volcanium (strain ATCC 51530 / DSM 4299 / JCM 9571 / NBRC 15438 / GSS1)</name>
    <dbReference type="NCBI Taxonomy" id="273116"/>
    <lineage>
        <taxon>Archaea</taxon>
        <taxon>Methanobacteriati</taxon>
        <taxon>Thermoplasmatota</taxon>
        <taxon>Thermoplasmata</taxon>
        <taxon>Thermoplasmatales</taxon>
        <taxon>Thermoplasmataceae</taxon>
        <taxon>Thermoplasma</taxon>
    </lineage>
</organism>
<dbReference type="EC" id="3.5.4.39" evidence="1"/>
<dbReference type="EMBL" id="BA000011">
    <property type="protein sequence ID" value="BAB60380.1"/>
    <property type="molecule type" value="Genomic_DNA"/>
</dbReference>
<dbReference type="RefSeq" id="WP_010917472.1">
    <property type="nucleotide sequence ID" value="NC_002689.2"/>
</dbReference>
<dbReference type="SMR" id="Q979C3"/>
<dbReference type="STRING" id="273116.gene:9382043"/>
<dbReference type="PaxDb" id="273116-14325476"/>
<dbReference type="GeneID" id="1441354"/>
<dbReference type="KEGG" id="tvo:TVG1279013"/>
<dbReference type="eggNOG" id="arCOG04301">
    <property type="taxonomic scope" value="Archaea"/>
</dbReference>
<dbReference type="HOGENOM" id="CLU_062816_1_0_2"/>
<dbReference type="OrthoDB" id="53087at2157"/>
<dbReference type="PhylomeDB" id="Q979C3"/>
<dbReference type="UniPathway" id="UPA00065"/>
<dbReference type="Proteomes" id="UP000001017">
    <property type="component" value="Chromosome"/>
</dbReference>
<dbReference type="GO" id="GO:0003934">
    <property type="term" value="F:GTP cyclohydrolase I activity"/>
    <property type="evidence" value="ECO:0007669"/>
    <property type="project" value="InterPro"/>
</dbReference>
<dbReference type="GO" id="GO:0044682">
    <property type="term" value="F:GTP cyclohydrolase IV activity"/>
    <property type="evidence" value="ECO:0007669"/>
    <property type="project" value="UniProtKB-UniRule"/>
</dbReference>
<dbReference type="GO" id="GO:0005506">
    <property type="term" value="F:iron ion binding"/>
    <property type="evidence" value="ECO:0007669"/>
    <property type="project" value="UniProtKB-UniRule"/>
</dbReference>
<dbReference type="GO" id="GO:2001118">
    <property type="term" value="P:tetrahydromethanopterin biosynthetic process"/>
    <property type="evidence" value="ECO:0007669"/>
    <property type="project" value="UniProtKB-UniRule"/>
</dbReference>
<dbReference type="Gene3D" id="3.10.270.10">
    <property type="entry name" value="Urate Oxidase"/>
    <property type="match status" value="1"/>
</dbReference>
<dbReference type="HAMAP" id="MF_01527_A">
    <property type="entry name" value="GTP_cyclohydrol_A"/>
    <property type="match status" value="1"/>
</dbReference>
<dbReference type="InterPro" id="IPR003801">
    <property type="entry name" value="GTP_cyclohydrolase_FolE2/MptA"/>
</dbReference>
<dbReference type="InterPro" id="IPR022840">
    <property type="entry name" value="GTP_cyclohydrolase_MptA"/>
</dbReference>
<dbReference type="NCBIfam" id="TIGR00294">
    <property type="entry name" value="GTP cyclohydrolase MptA"/>
    <property type="match status" value="1"/>
</dbReference>
<dbReference type="PANTHER" id="PTHR36445">
    <property type="entry name" value="GTP CYCLOHYDROLASE MPTA"/>
    <property type="match status" value="1"/>
</dbReference>
<dbReference type="PANTHER" id="PTHR36445:SF1">
    <property type="entry name" value="GTP CYCLOHYDROLASE MPTA"/>
    <property type="match status" value="1"/>
</dbReference>
<dbReference type="Pfam" id="PF02649">
    <property type="entry name" value="GCHY-1"/>
    <property type="match status" value="1"/>
</dbReference>
<evidence type="ECO:0000255" key="1">
    <source>
        <dbReference type="HAMAP-Rule" id="MF_01527"/>
    </source>
</evidence>
<keyword id="KW-0378">Hydrolase</keyword>
<keyword id="KW-0408">Iron</keyword>
<keyword id="KW-0479">Metal-binding</keyword>
<protein>
    <recommendedName>
        <fullName evidence="1">GTP cyclohydrolase MptA</fullName>
        <ecNumber evidence="1">3.5.4.39</ecNumber>
    </recommendedName>
    <alternativeName>
        <fullName evidence="1">GTP cyclohydrolase IV</fullName>
    </alternativeName>
</protein>